<accession>Q0NZX6</accession>
<proteinExistence type="evidence at transcript level"/>
<name>VM2JR_BOTJA</name>
<evidence type="ECO:0000250" key="1"/>
<evidence type="ECO:0000250" key="2">
    <source>
        <dbReference type="UniProtKB" id="Q0NZX5"/>
    </source>
</evidence>
<evidence type="ECO:0000255" key="3">
    <source>
        <dbReference type="PROSITE-ProRule" id="PRU00068"/>
    </source>
</evidence>
<evidence type="ECO:0000255" key="4">
    <source>
        <dbReference type="PROSITE-ProRule" id="PRU00276"/>
    </source>
</evidence>
<evidence type="ECO:0000256" key="5">
    <source>
        <dbReference type="SAM" id="MobiDB-lite"/>
    </source>
</evidence>
<evidence type="ECO:0000305" key="6"/>
<evidence type="ECO:0000305" key="7">
    <source>
    </source>
</evidence>
<organism>
    <name type="scientific">Bothrops jararaca</name>
    <name type="common">Jararaca</name>
    <name type="synonym">Bothrops jajaraca</name>
    <dbReference type="NCBI Taxonomy" id="8724"/>
    <lineage>
        <taxon>Eukaryota</taxon>
        <taxon>Metazoa</taxon>
        <taxon>Chordata</taxon>
        <taxon>Craniata</taxon>
        <taxon>Vertebrata</taxon>
        <taxon>Euteleostomi</taxon>
        <taxon>Lepidosauria</taxon>
        <taxon>Squamata</taxon>
        <taxon>Bifurcata</taxon>
        <taxon>Unidentata</taxon>
        <taxon>Episquamata</taxon>
        <taxon>Toxicofera</taxon>
        <taxon>Serpentes</taxon>
        <taxon>Colubroidea</taxon>
        <taxon>Viperidae</taxon>
        <taxon>Crotalinae</taxon>
        <taxon>Bothrops</taxon>
    </lineage>
</organism>
<dbReference type="EC" id="3.4.24.-"/>
<dbReference type="EMBL" id="DQ375440">
    <property type="protein sequence ID" value="ABD34833.1"/>
    <property type="molecule type" value="mRNA"/>
</dbReference>
<dbReference type="SMR" id="Q0NZX6"/>
<dbReference type="MEROPS" id="M12.313"/>
<dbReference type="GO" id="GO:0005576">
    <property type="term" value="C:extracellular region"/>
    <property type="evidence" value="ECO:0007669"/>
    <property type="project" value="UniProtKB-SubCell"/>
</dbReference>
<dbReference type="GO" id="GO:0005886">
    <property type="term" value="C:plasma membrane"/>
    <property type="evidence" value="ECO:0007669"/>
    <property type="project" value="TreeGrafter"/>
</dbReference>
<dbReference type="GO" id="GO:0046872">
    <property type="term" value="F:metal ion binding"/>
    <property type="evidence" value="ECO:0007669"/>
    <property type="project" value="UniProtKB-KW"/>
</dbReference>
<dbReference type="GO" id="GO:0004222">
    <property type="term" value="F:metalloendopeptidase activity"/>
    <property type="evidence" value="ECO:0007669"/>
    <property type="project" value="InterPro"/>
</dbReference>
<dbReference type="GO" id="GO:0090729">
    <property type="term" value="F:toxin activity"/>
    <property type="evidence" value="ECO:0007669"/>
    <property type="project" value="UniProtKB-KW"/>
</dbReference>
<dbReference type="GO" id="GO:0006508">
    <property type="term" value="P:proteolysis"/>
    <property type="evidence" value="ECO:0007669"/>
    <property type="project" value="UniProtKB-KW"/>
</dbReference>
<dbReference type="FunFam" id="4.10.70.10:FF:000003">
    <property type="entry name" value="Disintegrin and metalloproteinase domain-containing protein 17"/>
    <property type="match status" value="1"/>
</dbReference>
<dbReference type="Gene3D" id="3.40.390.10">
    <property type="entry name" value="Collagenase (Catalytic Domain)"/>
    <property type="match status" value="1"/>
</dbReference>
<dbReference type="Gene3D" id="4.10.70.10">
    <property type="entry name" value="Disintegrin domain"/>
    <property type="match status" value="1"/>
</dbReference>
<dbReference type="InterPro" id="IPR018358">
    <property type="entry name" value="Disintegrin_CS"/>
</dbReference>
<dbReference type="InterPro" id="IPR001762">
    <property type="entry name" value="Disintegrin_dom"/>
</dbReference>
<dbReference type="InterPro" id="IPR036436">
    <property type="entry name" value="Disintegrin_dom_sf"/>
</dbReference>
<dbReference type="InterPro" id="IPR024079">
    <property type="entry name" value="MetalloPept_cat_dom_sf"/>
</dbReference>
<dbReference type="InterPro" id="IPR001590">
    <property type="entry name" value="Peptidase_M12B"/>
</dbReference>
<dbReference type="PANTHER" id="PTHR11905">
    <property type="entry name" value="ADAM A DISINTEGRIN AND METALLOPROTEASE DOMAIN"/>
    <property type="match status" value="1"/>
</dbReference>
<dbReference type="PANTHER" id="PTHR11905:SF32">
    <property type="entry name" value="DISINTEGRIN AND METALLOPROTEINASE DOMAIN-CONTAINING PROTEIN 28"/>
    <property type="match status" value="1"/>
</dbReference>
<dbReference type="Pfam" id="PF00200">
    <property type="entry name" value="Disintegrin"/>
    <property type="match status" value="1"/>
</dbReference>
<dbReference type="Pfam" id="PF01421">
    <property type="entry name" value="Reprolysin"/>
    <property type="match status" value="1"/>
</dbReference>
<dbReference type="PRINTS" id="PR00289">
    <property type="entry name" value="DISINTEGRIN"/>
</dbReference>
<dbReference type="SMART" id="SM00050">
    <property type="entry name" value="DISIN"/>
    <property type="match status" value="1"/>
</dbReference>
<dbReference type="SUPFAM" id="SSF57552">
    <property type="entry name" value="Blood coagulation inhibitor (disintegrin)"/>
    <property type="match status" value="1"/>
</dbReference>
<dbReference type="SUPFAM" id="SSF55486">
    <property type="entry name" value="Metalloproteases ('zincins'), catalytic domain"/>
    <property type="match status" value="1"/>
</dbReference>
<dbReference type="PROSITE" id="PS50215">
    <property type="entry name" value="ADAM_MEPRO"/>
    <property type="match status" value="1"/>
</dbReference>
<dbReference type="PROSITE" id="PS00427">
    <property type="entry name" value="DISINTEGRIN_1"/>
    <property type="match status" value="1"/>
</dbReference>
<dbReference type="PROSITE" id="PS50214">
    <property type="entry name" value="DISINTEGRIN_2"/>
    <property type="match status" value="1"/>
</dbReference>
<feature type="chain" id="PRO_0000329980" description="Zinc metalloproteinase-disintegrin jararin">
    <location>
        <begin position="1" status="less than"/>
        <end position="156"/>
    </location>
</feature>
<feature type="domain" description="Peptidase M12B" evidence="4">
    <location>
        <begin position="1" status="less than"/>
        <end position="67"/>
    </location>
</feature>
<feature type="domain" description="Disintegrin" evidence="3">
    <location>
        <begin position="75"/>
        <end position="156"/>
    </location>
</feature>
<feature type="region of interest" description="Disordered" evidence="5">
    <location>
        <begin position="136"/>
        <end position="156"/>
    </location>
</feature>
<feature type="short sequence motif" description="Cell attachment site">
    <location>
        <begin position="137"/>
        <end position="139"/>
    </location>
</feature>
<feature type="compositionally biased region" description="Basic and acidic residues" evidence="5">
    <location>
        <begin position="136"/>
        <end position="145"/>
    </location>
</feature>
<feature type="compositionally biased region" description="Polar residues" evidence="5">
    <location>
        <begin position="146"/>
        <end position="156"/>
    </location>
</feature>
<feature type="active site" evidence="4">
    <location>
        <position position="9"/>
    </location>
</feature>
<feature type="binding site" evidence="1">
    <location>
        <position position="8"/>
    </location>
    <ligand>
        <name>Zn(2+)</name>
        <dbReference type="ChEBI" id="CHEBI:29105"/>
        <note>catalytic</note>
    </ligand>
</feature>
<feature type="binding site" evidence="1">
    <location>
        <position position="12"/>
    </location>
    <ligand>
        <name>Zn(2+)</name>
        <dbReference type="ChEBI" id="CHEBI:29105"/>
        <note>catalytic</note>
    </ligand>
</feature>
<feature type="disulfide bond" evidence="4">
    <location>
        <begin position="23"/>
        <end position="47"/>
    </location>
</feature>
<feature type="disulfide bond" evidence="4">
    <location>
        <begin position="25"/>
        <end position="30"/>
    </location>
</feature>
<feature type="disulfide bond" evidence="6">
    <location>
        <begin position="78"/>
        <end position="97"/>
    </location>
</feature>
<feature type="disulfide bond" evidence="2">
    <location>
        <begin position="89"/>
        <end position="107"/>
    </location>
</feature>
<feature type="disulfide bond" evidence="2">
    <location>
        <begin position="91"/>
        <end position="102"/>
    </location>
</feature>
<feature type="disulfide bond" evidence="2">
    <location>
        <begin position="101"/>
        <end position="124"/>
    </location>
</feature>
<feature type="disulfide bond" evidence="2">
    <location>
        <begin position="115"/>
        <end position="121"/>
    </location>
</feature>
<feature type="disulfide bond" evidence="2">
    <location>
        <begin position="120"/>
        <end position="145"/>
    </location>
</feature>
<feature type="disulfide bond" evidence="2 3">
    <location>
        <begin position="133"/>
        <end position="152"/>
    </location>
</feature>
<feature type="non-terminal residue" evidence="6">
    <location>
        <position position="1"/>
    </location>
</feature>
<sequence>FVANRMAHELGHNLGIDNDRDSCSCGANSCIMSATVSNEPSSRFSDCSLNQYSSDLINYYGCLLNEPLRTDIVSPPFCGNYYPEVGEDCDCGPPANCQNPCCDAATCKLTTGSQCAEGLCCDQCKFIKARQICRKGRGDNPDDRCTGQSGDCPRNS</sequence>
<comment type="function">
    <text evidence="1">Snake venom zinc metalloproteinase that inhibits ADP-induced platelet aggregation (probably by binding integrin alpha-IIb/beta-3 (ITGA2B/ITGB3)) and degrades fibrinogen.</text>
</comment>
<comment type="cofactor">
    <cofactor evidence="1">
        <name>Zn(2+)</name>
        <dbReference type="ChEBI" id="CHEBI:29105"/>
    </cofactor>
    <text evidence="1">Binds 1 zinc ion per subunit.</text>
</comment>
<comment type="subunit">
    <text evidence="1">Monomer.</text>
</comment>
<comment type="subcellular location">
    <subcellularLocation>
        <location evidence="7">Secreted</location>
    </subcellularLocation>
</comment>
<comment type="tissue specificity">
    <text evidence="7">Expressed by the venom gland.</text>
</comment>
<comment type="similarity">
    <text evidence="6">Belongs to the venom metalloproteinase (M12B) family. P-II subfamily. P-IIb sub-subfamily.</text>
</comment>
<comment type="caution">
    <text evidence="6">Asn-18 is present instead of the conserved His which is expected to be zinc-binding residue. There is therefore some uncertainty concerning the enzymatic activity of this protein.</text>
</comment>
<protein>
    <recommendedName>
        <fullName>Zinc metalloproteinase-disintegrin jararin</fullName>
        <ecNumber>3.4.24.-</ecNumber>
    </recommendedName>
    <alternativeName>
        <fullName>Snake venom metalloproteinase</fullName>
        <shortName>SVMP</shortName>
    </alternativeName>
</protein>
<keyword id="KW-1217">Cell adhesion impairing toxin</keyword>
<keyword id="KW-1015">Disulfide bond</keyword>
<keyword id="KW-1199">Hemostasis impairing toxin</keyword>
<keyword id="KW-0378">Hydrolase</keyword>
<keyword id="KW-0479">Metal-binding</keyword>
<keyword id="KW-0482">Metalloprotease</keyword>
<keyword id="KW-1201">Platelet aggregation inhibiting toxin</keyword>
<keyword id="KW-0645">Protease</keyword>
<keyword id="KW-0964">Secreted</keyword>
<keyword id="KW-0800">Toxin</keyword>
<keyword id="KW-0862">Zinc</keyword>
<keyword id="KW-0865">Zymogen</keyword>
<reference key="1">
    <citation type="journal article" date="2006" name="Toxicon">
        <title>Molecular diversity of disintegrin-like domains within metalloproteinase precursors of Bothrops jararaca.</title>
        <authorList>
            <person name="Cidade D.A.P."/>
            <person name="Wermelinger L.S."/>
            <person name="Lobo-Hajdu G."/>
            <person name="Davila A.M.R."/>
            <person name="Bon C."/>
            <person name="Zingali R.B."/>
            <person name="Albano R.M."/>
        </authorList>
    </citation>
    <scope>NUCLEOTIDE SEQUENCE [MRNA]</scope>
    <source>
        <tissue>Venom gland</tissue>
    </source>
</reference>